<accession>A4X8U5</accession>
<protein>
    <recommendedName>
        <fullName evidence="1">Large ribosomal subunit protein bL33A</fullName>
    </recommendedName>
    <alternativeName>
        <fullName evidence="1">50S ribosomal protein L33 1</fullName>
    </alternativeName>
</protein>
<dbReference type="EMBL" id="CP000667">
    <property type="protein sequence ID" value="ABP55295.1"/>
    <property type="molecule type" value="Genomic_DNA"/>
</dbReference>
<dbReference type="SMR" id="A4X8U5"/>
<dbReference type="STRING" id="369723.Strop_2854"/>
<dbReference type="KEGG" id="stp:Strop_2854"/>
<dbReference type="PATRIC" id="fig|369723.5.peg.2940"/>
<dbReference type="eggNOG" id="COG0267">
    <property type="taxonomic scope" value="Bacteria"/>
</dbReference>
<dbReference type="HOGENOM" id="CLU_190949_1_1_11"/>
<dbReference type="Proteomes" id="UP000000235">
    <property type="component" value="Chromosome"/>
</dbReference>
<dbReference type="GO" id="GO:0022625">
    <property type="term" value="C:cytosolic large ribosomal subunit"/>
    <property type="evidence" value="ECO:0007669"/>
    <property type="project" value="TreeGrafter"/>
</dbReference>
<dbReference type="GO" id="GO:0003735">
    <property type="term" value="F:structural constituent of ribosome"/>
    <property type="evidence" value="ECO:0007669"/>
    <property type="project" value="InterPro"/>
</dbReference>
<dbReference type="GO" id="GO:0006412">
    <property type="term" value="P:translation"/>
    <property type="evidence" value="ECO:0007669"/>
    <property type="project" value="UniProtKB-UniRule"/>
</dbReference>
<dbReference type="FunFam" id="2.20.28.120:FF:000002">
    <property type="entry name" value="50S ribosomal protein L33"/>
    <property type="match status" value="1"/>
</dbReference>
<dbReference type="Gene3D" id="2.20.28.120">
    <property type="entry name" value="Ribosomal protein L33"/>
    <property type="match status" value="1"/>
</dbReference>
<dbReference type="HAMAP" id="MF_00294">
    <property type="entry name" value="Ribosomal_bL33"/>
    <property type="match status" value="1"/>
</dbReference>
<dbReference type="InterPro" id="IPR001705">
    <property type="entry name" value="Ribosomal_bL33"/>
</dbReference>
<dbReference type="InterPro" id="IPR018264">
    <property type="entry name" value="Ribosomal_bL33_CS"/>
</dbReference>
<dbReference type="InterPro" id="IPR038584">
    <property type="entry name" value="Ribosomal_bL33_sf"/>
</dbReference>
<dbReference type="InterPro" id="IPR011332">
    <property type="entry name" value="Ribosomal_zn-bd"/>
</dbReference>
<dbReference type="NCBIfam" id="NF001860">
    <property type="entry name" value="PRK00595.1"/>
    <property type="match status" value="1"/>
</dbReference>
<dbReference type="NCBIfam" id="TIGR01023">
    <property type="entry name" value="rpmG_bact"/>
    <property type="match status" value="1"/>
</dbReference>
<dbReference type="PANTHER" id="PTHR15238">
    <property type="entry name" value="54S RIBOSOMAL PROTEIN L39, MITOCHONDRIAL"/>
    <property type="match status" value="1"/>
</dbReference>
<dbReference type="PANTHER" id="PTHR15238:SF1">
    <property type="entry name" value="LARGE RIBOSOMAL SUBUNIT PROTEIN BL33M"/>
    <property type="match status" value="1"/>
</dbReference>
<dbReference type="Pfam" id="PF00471">
    <property type="entry name" value="Ribosomal_L33"/>
    <property type="match status" value="1"/>
</dbReference>
<dbReference type="SUPFAM" id="SSF57829">
    <property type="entry name" value="Zn-binding ribosomal proteins"/>
    <property type="match status" value="1"/>
</dbReference>
<dbReference type="PROSITE" id="PS00582">
    <property type="entry name" value="RIBOSOMAL_L33"/>
    <property type="match status" value="1"/>
</dbReference>
<sequence>MARQTDVRPIVRLRSTAGTGYTYVTRKNRRNDPDRLVLRKYDPIVRQHVEFREAR</sequence>
<organism>
    <name type="scientific">Salinispora tropica (strain ATCC BAA-916 / DSM 44818 / JCM 13857 / NBRC 105044 / CNB-440)</name>
    <dbReference type="NCBI Taxonomy" id="369723"/>
    <lineage>
        <taxon>Bacteria</taxon>
        <taxon>Bacillati</taxon>
        <taxon>Actinomycetota</taxon>
        <taxon>Actinomycetes</taxon>
        <taxon>Micromonosporales</taxon>
        <taxon>Micromonosporaceae</taxon>
        <taxon>Salinispora</taxon>
    </lineage>
</organism>
<reference key="1">
    <citation type="journal article" date="2007" name="Proc. Natl. Acad. Sci. U.S.A.">
        <title>Genome sequencing reveals complex secondary metabolome in the marine actinomycete Salinispora tropica.</title>
        <authorList>
            <person name="Udwary D.W."/>
            <person name="Zeigler L."/>
            <person name="Asolkar R.N."/>
            <person name="Singan V."/>
            <person name="Lapidus A."/>
            <person name="Fenical W."/>
            <person name="Jensen P.R."/>
            <person name="Moore B.S."/>
        </authorList>
    </citation>
    <scope>NUCLEOTIDE SEQUENCE [LARGE SCALE GENOMIC DNA]</scope>
    <source>
        <strain>ATCC BAA-916 / DSM 44818 / JCM 13857 / NBRC 105044 / CNB-440</strain>
    </source>
</reference>
<keyword id="KW-1185">Reference proteome</keyword>
<keyword id="KW-0687">Ribonucleoprotein</keyword>
<keyword id="KW-0689">Ribosomal protein</keyword>
<gene>
    <name evidence="1" type="primary">rpmG1</name>
    <name type="ordered locus">Strop_2854</name>
</gene>
<proteinExistence type="inferred from homology"/>
<evidence type="ECO:0000255" key="1">
    <source>
        <dbReference type="HAMAP-Rule" id="MF_00294"/>
    </source>
</evidence>
<feature type="chain" id="PRO_0000356646" description="Large ribosomal subunit protein bL33A">
    <location>
        <begin position="1"/>
        <end position="55"/>
    </location>
</feature>
<name>RL331_SALTO</name>
<comment type="similarity">
    <text evidence="1">Belongs to the bacterial ribosomal protein bL33 family.</text>
</comment>